<name>CLPX_RHOE4</name>
<proteinExistence type="inferred from homology"/>
<feature type="chain" id="PRO_1000203740" description="ATP-dependent Clp protease ATP-binding subunit ClpX">
    <location>
        <begin position="1"/>
        <end position="426"/>
    </location>
</feature>
<feature type="domain" description="ClpX-type ZB" evidence="2">
    <location>
        <begin position="1"/>
        <end position="54"/>
    </location>
</feature>
<feature type="binding site" evidence="2">
    <location>
        <position position="13"/>
    </location>
    <ligand>
        <name>Zn(2+)</name>
        <dbReference type="ChEBI" id="CHEBI:29105"/>
    </ligand>
</feature>
<feature type="binding site" evidence="2">
    <location>
        <position position="16"/>
    </location>
    <ligand>
        <name>Zn(2+)</name>
        <dbReference type="ChEBI" id="CHEBI:29105"/>
    </ligand>
</feature>
<feature type="binding site" evidence="2">
    <location>
        <position position="35"/>
    </location>
    <ligand>
        <name>Zn(2+)</name>
        <dbReference type="ChEBI" id="CHEBI:29105"/>
    </ligand>
</feature>
<feature type="binding site" evidence="2">
    <location>
        <position position="38"/>
    </location>
    <ligand>
        <name>Zn(2+)</name>
        <dbReference type="ChEBI" id="CHEBI:29105"/>
    </ligand>
</feature>
<feature type="binding site" evidence="1">
    <location>
        <begin position="122"/>
        <end position="129"/>
    </location>
    <ligand>
        <name>ATP</name>
        <dbReference type="ChEBI" id="CHEBI:30616"/>
    </ligand>
</feature>
<protein>
    <recommendedName>
        <fullName evidence="1">ATP-dependent Clp protease ATP-binding subunit ClpX</fullName>
    </recommendedName>
</protein>
<accession>C1A1N6</accession>
<keyword id="KW-0067">ATP-binding</keyword>
<keyword id="KW-0143">Chaperone</keyword>
<keyword id="KW-0479">Metal-binding</keyword>
<keyword id="KW-0547">Nucleotide-binding</keyword>
<keyword id="KW-0862">Zinc</keyword>
<sequence>MARIGDGGDLLKCSFCGKSQKQVKKLIAGPGVYICDECIDLCNEIIEEELAESSEVKLDELPKPAEIREFLENYVIGQDSAKRTLAVAVYNHYKRIQAGDKGRDARGETVELAKSNILMLGPTGCGKTYLAQTLAKMLNVPFAIADATALTEAGYVGEDVENILLKLIQAADYDVKRAETGIIYIDEVDKIARKSENPSITRDVSGEGVQQALLKILEGTQASVPPQGGRKHPHQEFIQIDTTNVLFIVAGAFAGLERIVSDRVGKRGIGFGAEVRSKAELDTVDRFAEVMPEDLIKFGLIPEFIGRLPMIASVTNLDKESLVQILSEPKNALVKQYRRLFDMDGVELEFTEEALDAIADQAILRGTGARGLRAIMEEVLLPVMYDIPSRDDVEKVVVTAETVNDNVLPTIVPRKPERGERRDKTA</sequence>
<organism>
    <name type="scientific">Rhodococcus erythropolis (strain PR4 / NBRC 100887)</name>
    <dbReference type="NCBI Taxonomy" id="234621"/>
    <lineage>
        <taxon>Bacteria</taxon>
        <taxon>Bacillati</taxon>
        <taxon>Actinomycetota</taxon>
        <taxon>Actinomycetes</taxon>
        <taxon>Mycobacteriales</taxon>
        <taxon>Nocardiaceae</taxon>
        <taxon>Rhodococcus</taxon>
        <taxon>Rhodococcus erythropolis group</taxon>
    </lineage>
</organism>
<reference key="1">
    <citation type="submission" date="2005-03" db="EMBL/GenBank/DDBJ databases">
        <title>Comparison of the complete genome sequences of Rhodococcus erythropolis PR4 and Rhodococcus opacus B4.</title>
        <authorList>
            <person name="Takarada H."/>
            <person name="Sekine M."/>
            <person name="Hosoyama A."/>
            <person name="Yamada R."/>
            <person name="Fujisawa T."/>
            <person name="Omata S."/>
            <person name="Shimizu A."/>
            <person name="Tsukatani N."/>
            <person name="Tanikawa S."/>
            <person name="Fujita N."/>
            <person name="Harayama S."/>
        </authorList>
    </citation>
    <scope>NUCLEOTIDE SEQUENCE [LARGE SCALE GENOMIC DNA]</scope>
    <source>
        <strain>PR4 / NBRC 100887</strain>
    </source>
</reference>
<comment type="function">
    <text evidence="1">ATP-dependent specificity component of the Clp protease. It directs the protease to specific substrates. Can perform chaperone functions in the absence of ClpP.</text>
</comment>
<comment type="subunit">
    <text evidence="1">Component of the ClpX-ClpP complex. Forms a hexameric ring that, in the presence of ATP, binds to fourteen ClpP subunits assembled into a disk-like structure with a central cavity, resembling the structure of eukaryotic proteasomes.</text>
</comment>
<comment type="similarity">
    <text evidence="1">Belongs to the ClpX chaperone family.</text>
</comment>
<evidence type="ECO:0000255" key="1">
    <source>
        <dbReference type="HAMAP-Rule" id="MF_00175"/>
    </source>
</evidence>
<evidence type="ECO:0000255" key="2">
    <source>
        <dbReference type="PROSITE-ProRule" id="PRU01250"/>
    </source>
</evidence>
<gene>
    <name evidence="1" type="primary">clpX</name>
    <name type="ordered locus">RER_38130</name>
</gene>
<dbReference type="EMBL" id="AP008957">
    <property type="protein sequence ID" value="BAH34521.1"/>
    <property type="molecule type" value="Genomic_DNA"/>
</dbReference>
<dbReference type="RefSeq" id="WP_003944582.1">
    <property type="nucleotide sequence ID" value="NC_012490.1"/>
</dbReference>
<dbReference type="SMR" id="C1A1N6"/>
<dbReference type="GeneID" id="93805325"/>
<dbReference type="KEGG" id="rer:RER_38130"/>
<dbReference type="eggNOG" id="COG1219">
    <property type="taxonomic scope" value="Bacteria"/>
</dbReference>
<dbReference type="HOGENOM" id="CLU_014218_8_2_11"/>
<dbReference type="Proteomes" id="UP000002204">
    <property type="component" value="Chromosome"/>
</dbReference>
<dbReference type="GO" id="GO:0009376">
    <property type="term" value="C:HslUV protease complex"/>
    <property type="evidence" value="ECO:0007669"/>
    <property type="project" value="TreeGrafter"/>
</dbReference>
<dbReference type="GO" id="GO:0005524">
    <property type="term" value="F:ATP binding"/>
    <property type="evidence" value="ECO:0007669"/>
    <property type="project" value="UniProtKB-UniRule"/>
</dbReference>
<dbReference type="GO" id="GO:0016887">
    <property type="term" value="F:ATP hydrolysis activity"/>
    <property type="evidence" value="ECO:0007669"/>
    <property type="project" value="InterPro"/>
</dbReference>
<dbReference type="GO" id="GO:0140662">
    <property type="term" value="F:ATP-dependent protein folding chaperone"/>
    <property type="evidence" value="ECO:0007669"/>
    <property type="project" value="InterPro"/>
</dbReference>
<dbReference type="GO" id="GO:0046983">
    <property type="term" value="F:protein dimerization activity"/>
    <property type="evidence" value="ECO:0007669"/>
    <property type="project" value="InterPro"/>
</dbReference>
<dbReference type="GO" id="GO:0051082">
    <property type="term" value="F:unfolded protein binding"/>
    <property type="evidence" value="ECO:0007669"/>
    <property type="project" value="UniProtKB-UniRule"/>
</dbReference>
<dbReference type="GO" id="GO:0008270">
    <property type="term" value="F:zinc ion binding"/>
    <property type="evidence" value="ECO:0007669"/>
    <property type="project" value="InterPro"/>
</dbReference>
<dbReference type="GO" id="GO:0051301">
    <property type="term" value="P:cell division"/>
    <property type="evidence" value="ECO:0007669"/>
    <property type="project" value="TreeGrafter"/>
</dbReference>
<dbReference type="GO" id="GO:0051603">
    <property type="term" value="P:proteolysis involved in protein catabolic process"/>
    <property type="evidence" value="ECO:0007669"/>
    <property type="project" value="TreeGrafter"/>
</dbReference>
<dbReference type="CDD" id="cd19497">
    <property type="entry name" value="RecA-like_ClpX"/>
    <property type="match status" value="1"/>
</dbReference>
<dbReference type="FunFam" id="1.10.8.60:FF:000002">
    <property type="entry name" value="ATP-dependent Clp protease ATP-binding subunit ClpX"/>
    <property type="match status" value="1"/>
</dbReference>
<dbReference type="FunFam" id="3.40.50.300:FF:000005">
    <property type="entry name" value="ATP-dependent Clp protease ATP-binding subunit ClpX"/>
    <property type="match status" value="1"/>
</dbReference>
<dbReference type="Gene3D" id="1.10.8.60">
    <property type="match status" value="1"/>
</dbReference>
<dbReference type="Gene3D" id="6.20.220.10">
    <property type="entry name" value="ClpX chaperone, C4-type zinc finger domain"/>
    <property type="match status" value="1"/>
</dbReference>
<dbReference type="Gene3D" id="3.40.50.300">
    <property type="entry name" value="P-loop containing nucleotide triphosphate hydrolases"/>
    <property type="match status" value="1"/>
</dbReference>
<dbReference type="HAMAP" id="MF_00175">
    <property type="entry name" value="ClpX"/>
    <property type="match status" value="1"/>
</dbReference>
<dbReference type="InterPro" id="IPR003593">
    <property type="entry name" value="AAA+_ATPase"/>
</dbReference>
<dbReference type="InterPro" id="IPR050052">
    <property type="entry name" value="ATP-dep_Clp_protease_ClpX"/>
</dbReference>
<dbReference type="InterPro" id="IPR003959">
    <property type="entry name" value="ATPase_AAA_core"/>
</dbReference>
<dbReference type="InterPro" id="IPR019489">
    <property type="entry name" value="Clp_ATPase_C"/>
</dbReference>
<dbReference type="InterPro" id="IPR004487">
    <property type="entry name" value="Clp_protease_ATP-bd_su_ClpX"/>
</dbReference>
<dbReference type="InterPro" id="IPR046425">
    <property type="entry name" value="ClpX_bact"/>
</dbReference>
<dbReference type="InterPro" id="IPR027417">
    <property type="entry name" value="P-loop_NTPase"/>
</dbReference>
<dbReference type="InterPro" id="IPR010603">
    <property type="entry name" value="Znf_CppX_C4"/>
</dbReference>
<dbReference type="InterPro" id="IPR038366">
    <property type="entry name" value="Znf_CppX_C4_sf"/>
</dbReference>
<dbReference type="NCBIfam" id="TIGR00382">
    <property type="entry name" value="clpX"/>
    <property type="match status" value="1"/>
</dbReference>
<dbReference type="NCBIfam" id="NF003745">
    <property type="entry name" value="PRK05342.1"/>
    <property type="match status" value="1"/>
</dbReference>
<dbReference type="PANTHER" id="PTHR48102:SF7">
    <property type="entry name" value="ATP-DEPENDENT CLP PROTEASE ATP-BINDING SUBUNIT CLPX-LIKE, MITOCHONDRIAL"/>
    <property type="match status" value="1"/>
</dbReference>
<dbReference type="PANTHER" id="PTHR48102">
    <property type="entry name" value="ATP-DEPENDENT CLP PROTEASE ATP-BINDING SUBUNIT CLPX-LIKE, MITOCHONDRIAL-RELATED"/>
    <property type="match status" value="1"/>
</dbReference>
<dbReference type="Pfam" id="PF07724">
    <property type="entry name" value="AAA_2"/>
    <property type="match status" value="1"/>
</dbReference>
<dbReference type="Pfam" id="PF10431">
    <property type="entry name" value="ClpB_D2-small"/>
    <property type="match status" value="1"/>
</dbReference>
<dbReference type="Pfam" id="PF06689">
    <property type="entry name" value="zf-C4_ClpX"/>
    <property type="match status" value="1"/>
</dbReference>
<dbReference type="SMART" id="SM00382">
    <property type="entry name" value="AAA"/>
    <property type="match status" value="1"/>
</dbReference>
<dbReference type="SMART" id="SM01086">
    <property type="entry name" value="ClpB_D2-small"/>
    <property type="match status" value="1"/>
</dbReference>
<dbReference type="SMART" id="SM00994">
    <property type="entry name" value="zf-C4_ClpX"/>
    <property type="match status" value="1"/>
</dbReference>
<dbReference type="SUPFAM" id="SSF57716">
    <property type="entry name" value="Glucocorticoid receptor-like (DNA-binding domain)"/>
    <property type="match status" value="1"/>
</dbReference>
<dbReference type="SUPFAM" id="SSF52540">
    <property type="entry name" value="P-loop containing nucleoside triphosphate hydrolases"/>
    <property type="match status" value="1"/>
</dbReference>
<dbReference type="PROSITE" id="PS51902">
    <property type="entry name" value="CLPX_ZB"/>
    <property type="match status" value="1"/>
</dbReference>